<feature type="chain" id="PRO_0000205050" description="ATP-dependent DNA helicase Q1">
    <location>
        <begin position="1"/>
        <end position="648"/>
    </location>
</feature>
<feature type="domain" description="Helicase ATP-binding" evidence="2">
    <location>
        <begin position="100"/>
        <end position="275"/>
    </location>
</feature>
<feature type="domain" description="Helicase C-terminal" evidence="3">
    <location>
        <begin position="299"/>
        <end position="451"/>
    </location>
</feature>
<feature type="region of interest" description="Disordered" evidence="4">
    <location>
        <begin position="601"/>
        <end position="648"/>
    </location>
</feature>
<feature type="short sequence motif" description="DEVH box">
    <location>
        <begin position="219"/>
        <end position="222"/>
    </location>
</feature>
<feature type="compositionally biased region" description="Basic and acidic residues" evidence="4">
    <location>
        <begin position="606"/>
        <end position="617"/>
    </location>
</feature>
<feature type="compositionally biased region" description="Polar residues" evidence="4">
    <location>
        <begin position="618"/>
        <end position="636"/>
    </location>
</feature>
<feature type="compositionally biased region" description="Basic residues" evidence="4">
    <location>
        <begin position="639"/>
        <end position="648"/>
    </location>
</feature>
<feature type="binding site" evidence="2">
    <location>
        <begin position="113"/>
        <end position="120"/>
    </location>
    <ligand>
        <name>ATP</name>
        <dbReference type="ChEBI" id="CHEBI:30616"/>
    </ligand>
</feature>
<feature type="binding site" evidence="1">
    <location>
        <position position="453"/>
    </location>
    <ligand>
        <name>Zn(2+)</name>
        <dbReference type="ChEBI" id="CHEBI:29105"/>
    </ligand>
</feature>
<feature type="binding site" evidence="1">
    <location>
        <position position="471"/>
    </location>
    <ligand>
        <name>Zn(2+)</name>
        <dbReference type="ChEBI" id="CHEBI:29105"/>
    </ligand>
</feature>
<feature type="binding site" evidence="1">
    <location>
        <position position="475"/>
    </location>
    <ligand>
        <name>Zn(2+)</name>
        <dbReference type="ChEBI" id="CHEBI:29105"/>
    </ligand>
</feature>
<feature type="binding site" evidence="1">
    <location>
        <position position="478"/>
    </location>
    <ligand>
        <name>Zn(2+)</name>
        <dbReference type="ChEBI" id="CHEBI:29105"/>
    </ligand>
</feature>
<feature type="modified residue" description="N6-acetyllysine" evidence="1">
    <location>
        <position position="514"/>
    </location>
</feature>
<feature type="modified residue" description="N6-acetyllysine" evidence="1">
    <location>
        <position position="522"/>
    </location>
</feature>
<feature type="modified residue" description="Phosphoserine" evidence="1">
    <location>
        <position position="597"/>
    </location>
</feature>
<feature type="modified residue" description="Phosphoserine" evidence="1">
    <location>
        <position position="633"/>
    </location>
</feature>
<feature type="splice variant" id="VSP_005567" description="In isoform Beta." evidence="6">
    <original>NSQKSKSRLQPSGSKNAGAKKRKLDDA</original>
    <variation>SHAADTAANV</variation>
    <location>
        <begin position="622"/>
        <end position="648"/>
    </location>
</feature>
<feature type="sequence conflict" description="In Ref. 1; BAA75085/BAA75086." evidence="6" ref="1">
    <original>A</original>
    <variation>V</variation>
    <location>
        <position position="216"/>
    </location>
</feature>
<feature type="sequence conflict" description="In Ref. 1; BAA75085/BAA75086." evidence="6" ref="1">
    <original>A</original>
    <variation>T</variation>
    <location>
        <position position="518"/>
    </location>
</feature>
<feature type="sequence conflict" description="In Ref. 1; BAA75085/BAA75086." evidence="6" ref="1">
    <original>A</original>
    <variation>P</variation>
    <location>
        <position position="525"/>
    </location>
</feature>
<feature type="sequence conflict" description="In Ref. 1; BAA75085/BAA75086." evidence="6" ref="1">
    <original>L</original>
    <variation>P</variation>
    <location>
        <position position="602"/>
    </location>
</feature>
<organism>
    <name type="scientific">Mus musculus</name>
    <name type="common">Mouse</name>
    <dbReference type="NCBI Taxonomy" id="10090"/>
    <lineage>
        <taxon>Eukaryota</taxon>
        <taxon>Metazoa</taxon>
        <taxon>Chordata</taxon>
        <taxon>Craniata</taxon>
        <taxon>Vertebrata</taxon>
        <taxon>Euteleostomi</taxon>
        <taxon>Mammalia</taxon>
        <taxon>Eutheria</taxon>
        <taxon>Euarchontoglires</taxon>
        <taxon>Glires</taxon>
        <taxon>Rodentia</taxon>
        <taxon>Myomorpha</taxon>
        <taxon>Muroidea</taxon>
        <taxon>Muridae</taxon>
        <taxon>Murinae</taxon>
        <taxon>Mus</taxon>
        <taxon>Mus</taxon>
    </lineage>
</organism>
<accession>Q9Z129</accession>
<accession>Q3TPI5</accession>
<accession>Q9Z128</accession>
<comment type="function">
    <text evidence="1">DNA helicase that plays a role in DNA damage repair and genome stability (By similarity). Exhibits a magnesium- and ATP-dependent DNA-helicase activity that unwinds single- and double-stranded DNA in a 3'-5' direction (By similarity). Plays a role in restoring regressed replication forks (By similarity). Required to restart stalled replication forks induced by abortive topoisomerase 1 and 2 lesions (By similarity). May play a role in the repair of DNA that is damaged by ultraviolet light or other mutagens (By similarity).</text>
</comment>
<comment type="catalytic activity">
    <reaction evidence="1">
        <text>Couples ATP hydrolysis with the unwinding of duplex DNA by translocating in the 3'-5' direction.</text>
        <dbReference type="EC" id="5.6.2.4"/>
    </reaction>
</comment>
<comment type="catalytic activity">
    <reaction evidence="1">
        <text>ATP + H2O = ADP + phosphate + H(+)</text>
        <dbReference type="Rhea" id="RHEA:13065"/>
        <dbReference type="ChEBI" id="CHEBI:15377"/>
        <dbReference type="ChEBI" id="CHEBI:15378"/>
        <dbReference type="ChEBI" id="CHEBI:30616"/>
        <dbReference type="ChEBI" id="CHEBI:43474"/>
        <dbReference type="ChEBI" id="CHEBI:456216"/>
    </reaction>
    <physiologicalReaction direction="left-to-right" evidence="1">
        <dbReference type="Rhea" id="RHEA:13066"/>
    </physiologicalReaction>
</comment>
<comment type="catalytic activity">
    <reaction evidence="1">
        <text>dATP + H2O = dADP + phosphate + H(+)</text>
        <dbReference type="Rhea" id="RHEA:51908"/>
        <dbReference type="ChEBI" id="CHEBI:15377"/>
        <dbReference type="ChEBI" id="CHEBI:15378"/>
        <dbReference type="ChEBI" id="CHEBI:43474"/>
        <dbReference type="ChEBI" id="CHEBI:57667"/>
        <dbReference type="ChEBI" id="CHEBI:61404"/>
    </reaction>
    <physiologicalReaction direction="left-to-right" evidence="1">
        <dbReference type="Rhea" id="RHEA:51909"/>
    </physiologicalReaction>
</comment>
<comment type="cofactor">
    <cofactor evidence="1">
        <name>Mg(2+)</name>
        <dbReference type="ChEBI" id="CHEBI:18420"/>
    </cofactor>
    <cofactor evidence="1">
        <name>Mn(2+)</name>
        <dbReference type="ChEBI" id="CHEBI:29035"/>
    </cofactor>
</comment>
<comment type="cofactor">
    <cofactor evidence="1">
        <name>Zn(2+)</name>
        <dbReference type="ChEBI" id="CHEBI:29105"/>
    </cofactor>
    <text evidence="1">Binds 1 Zn(2+) per monomer.</text>
</comment>
<comment type="subunit">
    <text evidence="1">May form homodimers or higher order oligomers (By similarity). Interacts with EXO1. Interacts with MLH1. Interacts with PARP1 (By similarity).</text>
</comment>
<comment type="subcellular location">
    <subcellularLocation>
        <location evidence="1">Nucleus</location>
    </subcellularLocation>
</comment>
<comment type="alternative products">
    <event type="alternative splicing"/>
    <isoform>
        <id>Q9Z129-1</id>
        <name>Alpha</name>
        <sequence type="displayed"/>
    </isoform>
    <isoform>
        <id>Q9Z129-2</id>
        <name>Beta</name>
        <sequence type="described" ref="VSP_005567"/>
    </isoform>
</comment>
<comment type="tissue specificity">
    <molecule>Isoform Alpha</molecule>
    <text evidence="5">Expressed in all tissues examined.</text>
</comment>
<comment type="tissue specificity">
    <molecule>Isoform Beta</molecule>
    <text evidence="5">Only expressed in spermatocytes. Expression increases at pachytene (17 days old) and decreases after completion of meiosis II (7 weeks old).</text>
</comment>
<comment type="similarity">
    <text evidence="6">Belongs to the helicase family. RecQ subfamily.</text>
</comment>
<keyword id="KW-0007">Acetylation</keyword>
<keyword id="KW-0025">Alternative splicing</keyword>
<keyword id="KW-0067">ATP-binding</keyword>
<keyword id="KW-0903">Direct protein sequencing</keyword>
<keyword id="KW-0238">DNA-binding</keyword>
<keyword id="KW-0347">Helicase</keyword>
<keyword id="KW-0378">Hydrolase</keyword>
<keyword id="KW-0413">Isomerase</keyword>
<keyword id="KW-0479">Metal-binding</keyword>
<keyword id="KW-0547">Nucleotide-binding</keyword>
<keyword id="KW-0539">Nucleus</keyword>
<keyword id="KW-0597">Phosphoprotein</keyword>
<keyword id="KW-1185">Reference proteome</keyword>
<keyword id="KW-0862">Zinc</keyword>
<gene>
    <name type="primary">Recql</name>
    <name type="synonym">Recql1</name>
</gene>
<sequence length="648" mass="72484">MASVSALTEELESVASELHAIDIQIQELTERRQELLQRKSVLTGKIKQYLEDSSAEASSDLDTSPAAWNKEDFPWFGKVKDVLQNVFKLQKFRPLQLETINVTMARKDIFLVMPTGGGKSLCYQLPALCSDGFTLVICPLISLMEDQLMVLKQLGISATMLNASSSKEHVKWVHAEMVNKNSQLKLIYVTPEKIAKSKMFMSRLEKAYEAGRLTGAAVDEVHCCSQWGHDFRPDYKALGILKRQFPNASLMGLTATATNHVLKDVQKILCVGKCLTFTASFNRPNLFYEVRQKPSSAEDFTEDIVKLINGRYKGQSGIIYCFSQKDSEQITISLQKLGIHAGTYHANMEPEDKTKVHTQWSANELQVVVATVAFGMGIDKPDVRFVIHHSMSKSMENYYQESGRAGRDDSRADCILYYGFGDIFRISSMVVMENVGQQKLYEMVSYCQNVSKCRRVLIAQHFDEVWNADACNKMCDNCCKDVSFEKKNVTQHCRDLIKILKQAEGLNEKLTPLKLIDAWMGKGAAKLRVAGVVAPALPREDLERIVAHALLQQYLKEDYSFTAYATISYLKVGPRACLLSNEAHAVTMQVKKSAQSSVRGALSEARQVEQVDSKGEEQSSGNSQKSKSRLQPSGSKNAGAKKRKLDDA</sequence>
<evidence type="ECO:0000250" key="1">
    <source>
        <dbReference type="UniProtKB" id="P46063"/>
    </source>
</evidence>
<evidence type="ECO:0000255" key="2">
    <source>
        <dbReference type="PROSITE-ProRule" id="PRU00541"/>
    </source>
</evidence>
<evidence type="ECO:0000255" key="3">
    <source>
        <dbReference type="PROSITE-ProRule" id="PRU00542"/>
    </source>
</evidence>
<evidence type="ECO:0000256" key="4">
    <source>
        <dbReference type="SAM" id="MobiDB-lite"/>
    </source>
</evidence>
<evidence type="ECO:0000269" key="5">
    <source>
    </source>
</evidence>
<evidence type="ECO:0000305" key="6"/>
<dbReference type="EC" id="5.6.2.4" evidence="1"/>
<dbReference type="EMBL" id="AB017104">
    <property type="protein sequence ID" value="BAA75085.1"/>
    <property type="molecule type" value="mRNA"/>
</dbReference>
<dbReference type="EMBL" id="AB017105">
    <property type="protein sequence ID" value="BAA75086.1"/>
    <property type="molecule type" value="mRNA"/>
</dbReference>
<dbReference type="EMBL" id="AK137589">
    <property type="protein sequence ID" value="BAE23422.1"/>
    <property type="molecule type" value="mRNA"/>
</dbReference>
<dbReference type="EMBL" id="AK164344">
    <property type="protein sequence ID" value="BAE37751.1"/>
    <property type="molecule type" value="mRNA"/>
</dbReference>
<dbReference type="EMBL" id="CH466572">
    <property type="protein sequence ID" value="EDL10638.1"/>
    <property type="molecule type" value="Genomic_DNA"/>
</dbReference>
<dbReference type="CCDS" id="CCDS39695.1">
    <molecule id="Q9Z129-1"/>
</dbReference>
<dbReference type="CCDS" id="CCDS57465.1">
    <molecule id="Q9Z129-2"/>
</dbReference>
<dbReference type="RefSeq" id="NP_001191836.1">
    <molecule id="Q9Z129-2"/>
    <property type="nucleotide sequence ID" value="NM_001204907.2"/>
</dbReference>
<dbReference type="RefSeq" id="NP_001342440.1">
    <molecule id="Q9Z129-1"/>
    <property type="nucleotide sequence ID" value="NM_001355511.2"/>
</dbReference>
<dbReference type="RefSeq" id="NP_001397234.1">
    <molecule id="Q9Z129-1"/>
    <property type="nucleotide sequence ID" value="NM_001410305.1"/>
</dbReference>
<dbReference type="RefSeq" id="NP_001397238.1">
    <molecule id="Q9Z129-2"/>
    <property type="nucleotide sequence ID" value="NM_001410309.1"/>
</dbReference>
<dbReference type="RefSeq" id="NP_075529.2">
    <molecule id="Q9Z129-1"/>
    <property type="nucleotide sequence ID" value="NM_023042.4"/>
</dbReference>
<dbReference type="RefSeq" id="XP_017176957.1">
    <property type="nucleotide sequence ID" value="XM_017321468.1"/>
</dbReference>
<dbReference type="RefSeq" id="XP_017176958.1">
    <property type="nucleotide sequence ID" value="XM_017321469.1"/>
</dbReference>
<dbReference type="SMR" id="Q9Z129"/>
<dbReference type="BioGRID" id="202847">
    <property type="interactions" value="10"/>
</dbReference>
<dbReference type="FunCoup" id="Q9Z129">
    <property type="interactions" value="3719"/>
</dbReference>
<dbReference type="STRING" id="10090.ENSMUSP00000107434"/>
<dbReference type="iPTMnet" id="Q9Z129"/>
<dbReference type="PhosphoSitePlus" id="Q9Z129"/>
<dbReference type="PaxDb" id="10090-ENSMUSP00000107434"/>
<dbReference type="ProteomicsDB" id="255173">
    <molecule id="Q9Z129-1"/>
</dbReference>
<dbReference type="ProteomicsDB" id="255174">
    <molecule id="Q9Z129-2"/>
</dbReference>
<dbReference type="Pumba" id="Q9Z129"/>
<dbReference type="Antibodypedia" id="4055">
    <property type="antibodies" value="91 antibodies from 20 providers"/>
</dbReference>
<dbReference type="DNASU" id="19691"/>
<dbReference type="Ensembl" id="ENSMUST00000032370.13">
    <molecule id="Q9Z129-2"/>
    <property type="protein sequence ID" value="ENSMUSP00000032370.7"/>
    <property type="gene ID" value="ENSMUSG00000030243.17"/>
</dbReference>
<dbReference type="Ensembl" id="ENSMUST00000111803.9">
    <molecule id="Q9Z129-1"/>
    <property type="protein sequence ID" value="ENSMUSP00000107434.3"/>
    <property type="gene ID" value="ENSMUSG00000030243.17"/>
</dbReference>
<dbReference type="GeneID" id="19691"/>
<dbReference type="KEGG" id="mmu:19691"/>
<dbReference type="UCSC" id="uc009epf.2">
    <molecule id="Q9Z129-1"/>
    <property type="organism name" value="mouse"/>
</dbReference>
<dbReference type="AGR" id="MGI:103021"/>
<dbReference type="CTD" id="5965"/>
<dbReference type="MGI" id="MGI:103021">
    <property type="gene designation" value="Recql"/>
</dbReference>
<dbReference type="VEuPathDB" id="HostDB:ENSMUSG00000030243"/>
<dbReference type="eggNOG" id="KOG0353">
    <property type="taxonomic scope" value="Eukaryota"/>
</dbReference>
<dbReference type="GeneTree" id="ENSGT00940000157013"/>
<dbReference type="HOGENOM" id="CLU_001103_12_5_1"/>
<dbReference type="InParanoid" id="Q9Z129"/>
<dbReference type="OMA" id="FKLSTMV"/>
<dbReference type="OrthoDB" id="10261556at2759"/>
<dbReference type="PhylomeDB" id="Q9Z129"/>
<dbReference type="TreeFam" id="TF323555"/>
<dbReference type="BioGRID-ORCS" id="19691">
    <property type="hits" value="3 hits in 116 CRISPR screens"/>
</dbReference>
<dbReference type="PRO" id="PR:Q9Z129"/>
<dbReference type="Proteomes" id="UP000000589">
    <property type="component" value="Chromosome 6"/>
</dbReference>
<dbReference type="RNAct" id="Q9Z129">
    <property type="molecule type" value="protein"/>
</dbReference>
<dbReference type="Bgee" id="ENSMUSG00000030243">
    <property type="expression patterns" value="Expressed in spermatid and 245 other cell types or tissues"/>
</dbReference>
<dbReference type="ExpressionAtlas" id="Q9Z129">
    <property type="expression patterns" value="baseline and differential"/>
</dbReference>
<dbReference type="GO" id="GO:0005654">
    <property type="term" value="C:nucleoplasm"/>
    <property type="evidence" value="ECO:0007669"/>
    <property type="project" value="Ensembl"/>
</dbReference>
<dbReference type="GO" id="GO:0005634">
    <property type="term" value="C:nucleus"/>
    <property type="evidence" value="ECO:0000250"/>
    <property type="project" value="UniProtKB"/>
</dbReference>
<dbReference type="GO" id="GO:0043138">
    <property type="term" value="F:3'-5' DNA helicase activity"/>
    <property type="evidence" value="ECO:0000250"/>
    <property type="project" value="UniProtKB"/>
</dbReference>
<dbReference type="GO" id="GO:0005524">
    <property type="term" value="F:ATP binding"/>
    <property type="evidence" value="ECO:0007669"/>
    <property type="project" value="UniProtKB-KW"/>
</dbReference>
<dbReference type="GO" id="GO:0016887">
    <property type="term" value="F:ATP hydrolysis activity"/>
    <property type="evidence" value="ECO:0007669"/>
    <property type="project" value="RHEA"/>
</dbReference>
<dbReference type="GO" id="GO:1990814">
    <property type="term" value="F:DNA/DNA annealing activity"/>
    <property type="evidence" value="ECO:0007669"/>
    <property type="project" value="Ensembl"/>
</dbReference>
<dbReference type="GO" id="GO:0036121">
    <property type="term" value="F:double-stranded DNA helicase activity"/>
    <property type="evidence" value="ECO:0000250"/>
    <property type="project" value="UniProtKB"/>
</dbReference>
<dbReference type="GO" id="GO:0046872">
    <property type="term" value="F:metal ion binding"/>
    <property type="evidence" value="ECO:0007669"/>
    <property type="project" value="UniProtKB-KW"/>
</dbReference>
<dbReference type="GO" id="GO:0006310">
    <property type="term" value="P:DNA recombination"/>
    <property type="evidence" value="ECO:0007669"/>
    <property type="project" value="InterPro"/>
</dbReference>
<dbReference type="GO" id="GO:0031297">
    <property type="term" value="P:replication fork processing"/>
    <property type="evidence" value="ECO:0000250"/>
    <property type="project" value="UniProtKB"/>
</dbReference>
<dbReference type="CDD" id="cd18015">
    <property type="entry name" value="DEXHc_RecQ1"/>
    <property type="match status" value="1"/>
</dbReference>
<dbReference type="CDD" id="cd18794">
    <property type="entry name" value="SF2_C_RecQ"/>
    <property type="match status" value="1"/>
</dbReference>
<dbReference type="FunFam" id="1.10.10.10:FF:000306">
    <property type="entry name" value="ATP-dependent DNA helicase"/>
    <property type="match status" value="1"/>
</dbReference>
<dbReference type="FunFam" id="3.40.50.300:FF:000596">
    <property type="entry name" value="ATP-dependent DNA helicase"/>
    <property type="match status" value="1"/>
</dbReference>
<dbReference type="FunFam" id="3.40.50.300:FF:000752">
    <property type="entry name" value="ATP-dependent DNA helicase"/>
    <property type="match status" value="1"/>
</dbReference>
<dbReference type="Gene3D" id="3.40.50.300">
    <property type="entry name" value="P-loop containing nucleotide triphosphate hydrolases"/>
    <property type="match status" value="2"/>
</dbReference>
<dbReference type="Gene3D" id="1.10.10.10">
    <property type="entry name" value="Winged helix-like DNA-binding domain superfamily/Winged helix DNA-binding domain"/>
    <property type="match status" value="1"/>
</dbReference>
<dbReference type="InterPro" id="IPR011545">
    <property type="entry name" value="DEAD/DEAH_box_helicase_dom"/>
</dbReference>
<dbReference type="InterPro" id="IPR004589">
    <property type="entry name" value="DNA_helicase_ATP-dep_RecQ"/>
</dbReference>
<dbReference type="InterPro" id="IPR014001">
    <property type="entry name" value="Helicase_ATP-bd"/>
</dbReference>
<dbReference type="InterPro" id="IPR001650">
    <property type="entry name" value="Helicase_C-like"/>
</dbReference>
<dbReference type="InterPro" id="IPR027417">
    <property type="entry name" value="P-loop_NTPase"/>
</dbReference>
<dbReference type="InterPro" id="IPR032284">
    <property type="entry name" value="RecQ_Zn-bd"/>
</dbReference>
<dbReference type="InterPro" id="IPR036388">
    <property type="entry name" value="WH-like_DNA-bd_sf"/>
</dbReference>
<dbReference type="NCBIfam" id="TIGR00614">
    <property type="entry name" value="recQ_fam"/>
    <property type="match status" value="1"/>
</dbReference>
<dbReference type="PANTHER" id="PTHR13710:SF105">
    <property type="entry name" value="ATP-DEPENDENT DNA HELICASE Q1"/>
    <property type="match status" value="1"/>
</dbReference>
<dbReference type="PANTHER" id="PTHR13710">
    <property type="entry name" value="DNA HELICASE RECQ FAMILY MEMBER"/>
    <property type="match status" value="1"/>
</dbReference>
<dbReference type="Pfam" id="PF00270">
    <property type="entry name" value="DEAD"/>
    <property type="match status" value="1"/>
</dbReference>
<dbReference type="Pfam" id="PF00271">
    <property type="entry name" value="Helicase_C"/>
    <property type="match status" value="1"/>
</dbReference>
<dbReference type="Pfam" id="PF16124">
    <property type="entry name" value="RecQ_Zn_bind"/>
    <property type="match status" value="1"/>
</dbReference>
<dbReference type="SMART" id="SM00487">
    <property type="entry name" value="DEXDc"/>
    <property type="match status" value="1"/>
</dbReference>
<dbReference type="SMART" id="SM00490">
    <property type="entry name" value="HELICc"/>
    <property type="match status" value="1"/>
</dbReference>
<dbReference type="SUPFAM" id="SSF52540">
    <property type="entry name" value="P-loop containing nucleoside triphosphate hydrolases"/>
    <property type="match status" value="2"/>
</dbReference>
<dbReference type="PROSITE" id="PS51192">
    <property type="entry name" value="HELICASE_ATP_BIND_1"/>
    <property type="match status" value="1"/>
</dbReference>
<dbReference type="PROSITE" id="PS51194">
    <property type="entry name" value="HELICASE_CTER"/>
    <property type="match status" value="1"/>
</dbReference>
<reference key="1">
    <citation type="journal article" date="1998" name="Biochim. Biophys. Acta">
        <title>Cloning of two isoforms of mouse DNA helicase Q1/RecQL cDNA; alpha form is expressed ubiquitously and beta form specifically in the testis.</title>
        <authorList>
            <person name="Wang W.-S."/>
            <person name="Seki M."/>
            <person name="Yamaoka T."/>
            <person name="Seki T."/>
            <person name="Tada S."/>
            <person name="Katada T."/>
            <person name="Fujimoto H."/>
            <person name="Enomoto T."/>
        </authorList>
    </citation>
    <scope>NUCLEOTIDE SEQUENCE [MRNA]</scope>
    <scope>ALTERNATIVE SPLICING</scope>
    <scope>TISSUE SPECIFICITY</scope>
    <source>
        <tissue>Spermatocyte</tissue>
        <tissue>Testis</tissue>
    </source>
</reference>
<reference key="2">
    <citation type="journal article" date="2005" name="Science">
        <title>The transcriptional landscape of the mammalian genome.</title>
        <authorList>
            <person name="Carninci P."/>
            <person name="Kasukawa T."/>
            <person name="Katayama S."/>
            <person name="Gough J."/>
            <person name="Frith M.C."/>
            <person name="Maeda N."/>
            <person name="Oyama R."/>
            <person name="Ravasi T."/>
            <person name="Lenhard B."/>
            <person name="Wells C."/>
            <person name="Kodzius R."/>
            <person name="Shimokawa K."/>
            <person name="Bajic V.B."/>
            <person name="Brenner S.E."/>
            <person name="Batalov S."/>
            <person name="Forrest A.R."/>
            <person name="Zavolan M."/>
            <person name="Davis M.J."/>
            <person name="Wilming L.G."/>
            <person name="Aidinis V."/>
            <person name="Allen J.E."/>
            <person name="Ambesi-Impiombato A."/>
            <person name="Apweiler R."/>
            <person name="Aturaliya R.N."/>
            <person name="Bailey T.L."/>
            <person name="Bansal M."/>
            <person name="Baxter L."/>
            <person name="Beisel K.W."/>
            <person name="Bersano T."/>
            <person name="Bono H."/>
            <person name="Chalk A.M."/>
            <person name="Chiu K.P."/>
            <person name="Choudhary V."/>
            <person name="Christoffels A."/>
            <person name="Clutterbuck D.R."/>
            <person name="Crowe M.L."/>
            <person name="Dalla E."/>
            <person name="Dalrymple B.P."/>
            <person name="de Bono B."/>
            <person name="Della Gatta G."/>
            <person name="di Bernardo D."/>
            <person name="Down T."/>
            <person name="Engstrom P."/>
            <person name="Fagiolini M."/>
            <person name="Faulkner G."/>
            <person name="Fletcher C.F."/>
            <person name="Fukushima T."/>
            <person name="Furuno M."/>
            <person name="Futaki S."/>
            <person name="Gariboldi M."/>
            <person name="Georgii-Hemming P."/>
            <person name="Gingeras T.R."/>
            <person name="Gojobori T."/>
            <person name="Green R.E."/>
            <person name="Gustincich S."/>
            <person name="Harbers M."/>
            <person name="Hayashi Y."/>
            <person name="Hensch T.K."/>
            <person name="Hirokawa N."/>
            <person name="Hill D."/>
            <person name="Huminiecki L."/>
            <person name="Iacono M."/>
            <person name="Ikeo K."/>
            <person name="Iwama A."/>
            <person name="Ishikawa T."/>
            <person name="Jakt M."/>
            <person name="Kanapin A."/>
            <person name="Katoh M."/>
            <person name="Kawasawa Y."/>
            <person name="Kelso J."/>
            <person name="Kitamura H."/>
            <person name="Kitano H."/>
            <person name="Kollias G."/>
            <person name="Krishnan S.P."/>
            <person name="Kruger A."/>
            <person name="Kummerfeld S.K."/>
            <person name="Kurochkin I.V."/>
            <person name="Lareau L.F."/>
            <person name="Lazarevic D."/>
            <person name="Lipovich L."/>
            <person name="Liu J."/>
            <person name="Liuni S."/>
            <person name="McWilliam S."/>
            <person name="Madan Babu M."/>
            <person name="Madera M."/>
            <person name="Marchionni L."/>
            <person name="Matsuda H."/>
            <person name="Matsuzawa S."/>
            <person name="Miki H."/>
            <person name="Mignone F."/>
            <person name="Miyake S."/>
            <person name="Morris K."/>
            <person name="Mottagui-Tabar S."/>
            <person name="Mulder N."/>
            <person name="Nakano N."/>
            <person name="Nakauchi H."/>
            <person name="Ng P."/>
            <person name="Nilsson R."/>
            <person name="Nishiguchi S."/>
            <person name="Nishikawa S."/>
            <person name="Nori F."/>
            <person name="Ohara O."/>
            <person name="Okazaki Y."/>
            <person name="Orlando V."/>
            <person name="Pang K.C."/>
            <person name="Pavan W.J."/>
            <person name="Pavesi G."/>
            <person name="Pesole G."/>
            <person name="Petrovsky N."/>
            <person name="Piazza S."/>
            <person name="Reed J."/>
            <person name="Reid J.F."/>
            <person name="Ring B.Z."/>
            <person name="Ringwald M."/>
            <person name="Rost B."/>
            <person name="Ruan Y."/>
            <person name="Salzberg S.L."/>
            <person name="Sandelin A."/>
            <person name="Schneider C."/>
            <person name="Schoenbach C."/>
            <person name="Sekiguchi K."/>
            <person name="Semple C.A."/>
            <person name="Seno S."/>
            <person name="Sessa L."/>
            <person name="Sheng Y."/>
            <person name="Shibata Y."/>
            <person name="Shimada H."/>
            <person name="Shimada K."/>
            <person name="Silva D."/>
            <person name="Sinclair B."/>
            <person name="Sperling S."/>
            <person name="Stupka E."/>
            <person name="Sugiura K."/>
            <person name="Sultana R."/>
            <person name="Takenaka Y."/>
            <person name="Taki K."/>
            <person name="Tammoja K."/>
            <person name="Tan S.L."/>
            <person name="Tang S."/>
            <person name="Taylor M.S."/>
            <person name="Tegner J."/>
            <person name="Teichmann S.A."/>
            <person name="Ueda H.R."/>
            <person name="van Nimwegen E."/>
            <person name="Verardo R."/>
            <person name="Wei C.L."/>
            <person name="Yagi K."/>
            <person name="Yamanishi H."/>
            <person name="Zabarovsky E."/>
            <person name="Zhu S."/>
            <person name="Zimmer A."/>
            <person name="Hide W."/>
            <person name="Bult C."/>
            <person name="Grimmond S.M."/>
            <person name="Teasdale R.D."/>
            <person name="Liu E.T."/>
            <person name="Brusic V."/>
            <person name="Quackenbush J."/>
            <person name="Wahlestedt C."/>
            <person name="Mattick J.S."/>
            <person name="Hume D.A."/>
            <person name="Kai C."/>
            <person name="Sasaki D."/>
            <person name="Tomaru Y."/>
            <person name="Fukuda S."/>
            <person name="Kanamori-Katayama M."/>
            <person name="Suzuki M."/>
            <person name="Aoki J."/>
            <person name="Arakawa T."/>
            <person name="Iida J."/>
            <person name="Imamura K."/>
            <person name="Itoh M."/>
            <person name="Kato T."/>
            <person name="Kawaji H."/>
            <person name="Kawagashira N."/>
            <person name="Kawashima T."/>
            <person name="Kojima M."/>
            <person name="Kondo S."/>
            <person name="Konno H."/>
            <person name="Nakano K."/>
            <person name="Ninomiya N."/>
            <person name="Nishio T."/>
            <person name="Okada M."/>
            <person name="Plessy C."/>
            <person name="Shibata K."/>
            <person name="Shiraki T."/>
            <person name="Suzuki S."/>
            <person name="Tagami M."/>
            <person name="Waki K."/>
            <person name="Watahiki A."/>
            <person name="Okamura-Oho Y."/>
            <person name="Suzuki H."/>
            <person name="Kawai J."/>
            <person name="Hayashizaki Y."/>
        </authorList>
    </citation>
    <scope>NUCLEOTIDE SEQUENCE [LARGE SCALE MRNA] (ISOFORM ALPHA)</scope>
    <source>
        <strain>C57BL/6J</strain>
        <tissue>Bone</tissue>
        <tissue>Spinal ganglion</tissue>
    </source>
</reference>
<reference key="3">
    <citation type="submission" date="2005-07" db="EMBL/GenBank/DDBJ databases">
        <authorList>
            <person name="Mural R.J."/>
            <person name="Adams M.D."/>
            <person name="Myers E.W."/>
            <person name="Smith H.O."/>
            <person name="Venter J.C."/>
        </authorList>
    </citation>
    <scope>NUCLEOTIDE SEQUENCE [LARGE SCALE GENOMIC DNA]</scope>
</reference>
<reference key="4">
    <citation type="submission" date="2007-04" db="UniProtKB">
        <authorList>
            <person name="Lubec G."/>
            <person name="Kang S.U."/>
        </authorList>
    </citation>
    <scope>PROTEIN SEQUENCE OF 186-196 AND 502-509</scope>
    <scope>IDENTIFICATION BY MASS SPECTROMETRY</scope>
    <source>
        <strain>C57BL/6J</strain>
        <tissue>Brain</tissue>
    </source>
</reference>
<reference key="5">
    <citation type="journal article" date="2010" name="Cell">
        <title>A tissue-specific atlas of mouse protein phosphorylation and expression.</title>
        <authorList>
            <person name="Huttlin E.L."/>
            <person name="Jedrychowski M.P."/>
            <person name="Elias J.E."/>
            <person name="Goswami T."/>
            <person name="Rad R."/>
            <person name="Beausoleil S.A."/>
            <person name="Villen J."/>
            <person name="Haas W."/>
            <person name="Sowa M.E."/>
            <person name="Gygi S.P."/>
        </authorList>
    </citation>
    <scope>IDENTIFICATION BY MASS SPECTROMETRY [LARGE SCALE ANALYSIS]</scope>
    <source>
        <tissue>Testis</tissue>
    </source>
</reference>
<protein>
    <recommendedName>
        <fullName evidence="1">ATP-dependent DNA helicase Q1</fullName>
        <ecNumber evidence="1">5.6.2.4</ecNumber>
    </recommendedName>
    <alternativeName>
        <fullName evidence="6">DNA 3'-5' helicase Q1</fullName>
    </alternativeName>
    <alternativeName>
        <fullName>DNA-dependent ATPase Q1</fullName>
    </alternativeName>
    <alternativeName>
        <fullName>RecQ protein-like 1</fullName>
    </alternativeName>
</protein>
<name>RECQ1_MOUSE</name>
<proteinExistence type="evidence at protein level"/>